<proteinExistence type="inferred from homology"/>
<comment type="catalytic activity">
    <reaction evidence="1">
        <text>tRNA(Gly) + glycine + ATP = glycyl-tRNA(Gly) + AMP + diphosphate</text>
        <dbReference type="Rhea" id="RHEA:16013"/>
        <dbReference type="Rhea" id="RHEA-COMP:9664"/>
        <dbReference type="Rhea" id="RHEA-COMP:9683"/>
        <dbReference type="ChEBI" id="CHEBI:30616"/>
        <dbReference type="ChEBI" id="CHEBI:33019"/>
        <dbReference type="ChEBI" id="CHEBI:57305"/>
        <dbReference type="ChEBI" id="CHEBI:78442"/>
        <dbReference type="ChEBI" id="CHEBI:78522"/>
        <dbReference type="ChEBI" id="CHEBI:456215"/>
        <dbReference type="EC" id="6.1.1.14"/>
    </reaction>
</comment>
<comment type="subunit">
    <text evidence="1">Tetramer of two alpha and two beta subunits.</text>
</comment>
<comment type="subcellular location">
    <subcellularLocation>
        <location evidence="1">Cytoplasm</location>
    </subcellularLocation>
</comment>
<comment type="similarity">
    <text evidence="1">Belongs to the class-II aminoacyl-tRNA synthetase family.</text>
</comment>
<gene>
    <name evidence="1" type="primary">glyS</name>
    <name type="ordered locus">PSHAa0006</name>
</gene>
<protein>
    <recommendedName>
        <fullName evidence="1">Glycine--tRNA ligase beta subunit</fullName>
        <ecNumber evidence="1">6.1.1.14</ecNumber>
    </recommendedName>
    <alternativeName>
        <fullName evidence="1">Glycyl-tRNA synthetase beta subunit</fullName>
        <shortName evidence="1">GlyRS</shortName>
    </alternativeName>
</protein>
<evidence type="ECO:0000255" key="1">
    <source>
        <dbReference type="HAMAP-Rule" id="MF_00255"/>
    </source>
</evidence>
<sequence>MSAQNLLVEIGTEELPPKALRKLAEAFAANLTAELETLELAHQGVSWYASPRRLGLRVIALDAKQQDKEVEKRGPAIKAAFDADGNPTKAAMGWARGCGIEVKDAQTLETDKGAWLLHLAKVAGQETKTLMVDVINKALAKLPIPKPMRWGANKTQFIRPVHTVTILLGDELVTGEVLGKQVSNQLQGHRFHHPEKITINHADDIFDVLKSAYVIADYEQRKAQIRAQIEAAAKAINAVVAMDEDLLEEVTSLVEWPVTLTATFEEEFLAVPAEALIYTMKDDQKYFPLLDQNGKLLNKFLFVSNIESKDPSVVISGNEKVVRPRLADAQFFFESDKKKTLESRLESLDSVLFQKQLGTLKDKSARISELAGYIAQQLGADKELAQRAGLLSKTDLMTEMVMEFTDIQGVMGMHYARFDGEAEDVALAQNEQYMPRFAGDSLPTNLISCAVAIADKFDTLVGIFGIGQAPKGDKDPFALRRAAIGALRIMVEKELPLDILDLVAKSQTLFGDKLTNLNVSTDVFEFMLGRFRAWYQDEGIEVDVIQAVLARRPTKPVDFDRRVKAVSHFRTLDAAEALAAANKRVSNILAKNDITSEGNVDESLLTDDAEKVLAAQVAKFATELAPLYASGNYQEALSQLAGIRQSVDSFFDNVMVMADDEAVKQNRLALLSQLSGLFLGIADISVLQK</sequence>
<reference key="1">
    <citation type="journal article" date="2005" name="Genome Res.">
        <title>Coping with cold: the genome of the versatile marine Antarctica bacterium Pseudoalteromonas haloplanktis TAC125.</title>
        <authorList>
            <person name="Medigue C."/>
            <person name="Krin E."/>
            <person name="Pascal G."/>
            <person name="Barbe V."/>
            <person name="Bernsel A."/>
            <person name="Bertin P.N."/>
            <person name="Cheung F."/>
            <person name="Cruveiller S."/>
            <person name="D'Amico S."/>
            <person name="Duilio A."/>
            <person name="Fang G."/>
            <person name="Feller G."/>
            <person name="Ho C."/>
            <person name="Mangenot S."/>
            <person name="Marino G."/>
            <person name="Nilsson J."/>
            <person name="Parrilli E."/>
            <person name="Rocha E.P.C."/>
            <person name="Rouy Z."/>
            <person name="Sekowska A."/>
            <person name="Tutino M.L."/>
            <person name="Vallenet D."/>
            <person name="von Heijne G."/>
            <person name="Danchin A."/>
        </authorList>
    </citation>
    <scope>NUCLEOTIDE SEQUENCE [LARGE SCALE GENOMIC DNA]</scope>
    <source>
        <strain>TAC 125</strain>
    </source>
</reference>
<organism>
    <name type="scientific">Pseudoalteromonas translucida (strain TAC 125)</name>
    <dbReference type="NCBI Taxonomy" id="326442"/>
    <lineage>
        <taxon>Bacteria</taxon>
        <taxon>Pseudomonadati</taxon>
        <taxon>Pseudomonadota</taxon>
        <taxon>Gammaproteobacteria</taxon>
        <taxon>Alteromonadales</taxon>
        <taxon>Pseudoalteromonadaceae</taxon>
        <taxon>Pseudoalteromonas</taxon>
    </lineage>
</organism>
<dbReference type="EC" id="6.1.1.14" evidence="1"/>
<dbReference type="EMBL" id="CR954246">
    <property type="protein sequence ID" value="CAI85120.1"/>
    <property type="molecule type" value="Genomic_DNA"/>
</dbReference>
<dbReference type="SMR" id="Q3IJ28"/>
<dbReference type="STRING" id="326442.PSHAa0006"/>
<dbReference type="KEGG" id="pha:PSHAa0006"/>
<dbReference type="PATRIC" id="fig|326442.8.peg.6"/>
<dbReference type="eggNOG" id="COG0751">
    <property type="taxonomic scope" value="Bacteria"/>
</dbReference>
<dbReference type="HOGENOM" id="CLU_007220_2_2_6"/>
<dbReference type="BioCyc" id="PHAL326442:PSHA_RS00030-MONOMER"/>
<dbReference type="Proteomes" id="UP000006843">
    <property type="component" value="Chromosome I"/>
</dbReference>
<dbReference type="GO" id="GO:0005829">
    <property type="term" value="C:cytosol"/>
    <property type="evidence" value="ECO:0007669"/>
    <property type="project" value="TreeGrafter"/>
</dbReference>
<dbReference type="GO" id="GO:0004814">
    <property type="term" value="F:arginine-tRNA ligase activity"/>
    <property type="evidence" value="ECO:0007669"/>
    <property type="project" value="InterPro"/>
</dbReference>
<dbReference type="GO" id="GO:0005524">
    <property type="term" value="F:ATP binding"/>
    <property type="evidence" value="ECO:0007669"/>
    <property type="project" value="UniProtKB-UniRule"/>
</dbReference>
<dbReference type="GO" id="GO:0004820">
    <property type="term" value="F:glycine-tRNA ligase activity"/>
    <property type="evidence" value="ECO:0007669"/>
    <property type="project" value="UniProtKB-UniRule"/>
</dbReference>
<dbReference type="GO" id="GO:0006420">
    <property type="term" value="P:arginyl-tRNA aminoacylation"/>
    <property type="evidence" value="ECO:0007669"/>
    <property type="project" value="InterPro"/>
</dbReference>
<dbReference type="GO" id="GO:0006426">
    <property type="term" value="P:glycyl-tRNA aminoacylation"/>
    <property type="evidence" value="ECO:0007669"/>
    <property type="project" value="UniProtKB-UniRule"/>
</dbReference>
<dbReference type="Gene3D" id="1.10.730.10">
    <property type="entry name" value="Isoleucyl-tRNA Synthetase, Domain 1"/>
    <property type="match status" value="1"/>
</dbReference>
<dbReference type="HAMAP" id="MF_00255">
    <property type="entry name" value="Gly_tRNA_synth_beta"/>
    <property type="match status" value="1"/>
</dbReference>
<dbReference type="InterPro" id="IPR008909">
    <property type="entry name" value="DALR_anticod-bd"/>
</dbReference>
<dbReference type="InterPro" id="IPR015944">
    <property type="entry name" value="Gly-tRNA-synth_bsu"/>
</dbReference>
<dbReference type="InterPro" id="IPR006194">
    <property type="entry name" value="Gly-tRNA-synth_heterodimer"/>
</dbReference>
<dbReference type="NCBIfam" id="TIGR00211">
    <property type="entry name" value="glyS"/>
    <property type="match status" value="1"/>
</dbReference>
<dbReference type="PANTHER" id="PTHR30075:SF2">
    <property type="entry name" value="GLYCINE--TRNA LIGASE, CHLOROPLASTIC_MITOCHONDRIAL 2"/>
    <property type="match status" value="1"/>
</dbReference>
<dbReference type="PANTHER" id="PTHR30075">
    <property type="entry name" value="GLYCYL-TRNA SYNTHETASE"/>
    <property type="match status" value="1"/>
</dbReference>
<dbReference type="Pfam" id="PF05746">
    <property type="entry name" value="DALR_1"/>
    <property type="match status" value="1"/>
</dbReference>
<dbReference type="Pfam" id="PF02092">
    <property type="entry name" value="tRNA_synt_2f"/>
    <property type="match status" value="1"/>
</dbReference>
<dbReference type="PRINTS" id="PR01045">
    <property type="entry name" value="TRNASYNTHGB"/>
</dbReference>
<dbReference type="SMART" id="SM00836">
    <property type="entry name" value="DALR_1"/>
    <property type="match status" value="1"/>
</dbReference>
<dbReference type="SUPFAM" id="SSF109604">
    <property type="entry name" value="HD-domain/PDEase-like"/>
    <property type="match status" value="1"/>
</dbReference>
<dbReference type="PROSITE" id="PS50861">
    <property type="entry name" value="AA_TRNA_LIGASE_II_GLYAB"/>
    <property type="match status" value="1"/>
</dbReference>
<accession>Q3IJ28</accession>
<name>SYGB_PSET1</name>
<feature type="chain" id="PRO_1000006390" description="Glycine--tRNA ligase beta subunit">
    <location>
        <begin position="1"/>
        <end position="689"/>
    </location>
</feature>
<keyword id="KW-0030">Aminoacyl-tRNA synthetase</keyword>
<keyword id="KW-0067">ATP-binding</keyword>
<keyword id="KW-0963">Cytoplasm</keyword>
<keyword id="KW-0436">Ligase</keyword>
<keyword id="KW-0547">Nucleotide-binding</keyword>
<keyword id="KW-0648">Protein biosynthesis</keyword>
<keyword id="KW-1185">Reference proteome</keyword>